<dbReference type="EMBL" id="CP000611">
    <property type="protein sequence ID" value="ABQ73927.1"/>
    <property type="molecule type" value="Genomic_DNA"/>
</dbReference>
<dbReference type="RefSeq" id="WP_003411144.1">
    <property type="nucleotide sequence ID" value="NZ_CP016972.1"/>
</dbReference>
<dbReference type="SMR" id="A5U4H7"/>
<dbReference type="GeneID" id="45426128"/>
<dbReference type="KEGG" id="mra:MRA_2165"/>
<dbReference type="eggNOG" id="COG0206">
    <property type="taxonomic scope" value="Bacteria"/>
</dbReference>
<dbReference type="HOGENOM" id="CLU_024865_0_1_11"/>
<dbReference type="Proteomes" id="UP000001988">
    <property type="component" value="Chromosome"/>
</dbReference>
<dbReference type="GO" id="GO:0032153">
    <property type="term" value="C:cell division site"/>
    <property type="evidence" value="ECO:0007669"/>
    <property type="project" value="UniProtKB-UniRule"/>
</dbReference>
<dbReference type="GO" id="GO:0005737">
    <property type="term" value="C:cytoplasm"/>
    <property type="evidence" value="ECO:0007669"/>
    <property type="project" value="UniProtKB-SubCell"/>
</dbReference>
<dbReference type="GO" id="GO:0005525">
    <property type="term" value="F:GTP binding"/>
    <property type="evidence" value="ECO:0007669"/>
    <property type="project" value="UniProtKB-UniRule"/>
</dbReference>
<dbReference type="GO" id="GO:0003924">
    <property type="term" value="F:GTPase activity"/>
    <property type="evidence" value="ECO:0007669"/>
    <property type="project" value="UniProtKB-UniRule"/>
</dbReference>
<dbReference type="GO" id="GO:0000917">
    <property type="term" value="P:division septum assembly"/>
    <property type="evidence" value="ECO:0007669"/>
    <property type="project" value="UniProtKB-KW"/>
</dbReference>
<dbReference type="GO" id="GO:0043093">
    <property type="term" value="P:FtsZ-dependent cytokinesis"/>
    <property type="evidence" value="ECO:0007669"/>
    <property type="project" value="UniProtKB-UniRule"/>
</dbReference>
<dbReference type="GO" id="GO:0051258">
    <property type="term" value="P:protein polymerization"/>
    <property type="evidence" value="ECO:0007669"/>
    <property type="project" value="UniProtKB-UniRule"/>
</dbReference>
<dbReference type="CDD" id="cd02201">
    <property type="entry name" value="FtsZ_type1"/>
    <property type="match status" value="1"/>
</dbReference>
<dbReference type="FunFam" id="3.30.1330.20:FF:000005">
    <property type="entry name" value="Cell division protein FtsZ"/>
    <property type="match status" value="1"/>
</dbReference>
<dbReference type="FunFam" id="3.40.50.1440:FF:000001">
    <property type="entry name" value="Cell division protein FtsZ"/>
    <property type="match status" value="1"/>
</dbReference>
<dbReference type="Gene3D" id="3.30.1330.20">
    <property type="entry name" value="Tubulin/FtsZ, C-terminal domain"/>
    <property type="match status" value="1"/>
</dbReference>
<dbReference type="Gene3D" id="3.40.50.1440">
    <property type="entry name" value="Tubulin/FtsZ, GTPase domain"/>
    <property type="match status" value="1"/>
</dbReference>
<dbReference type="HAMAP" id="MF_00909">
    <property type="entry name" value="FtsZ"/>
    <property type="match status" value="1"/>
</dbReference>
<dbReference type="InterPro" id="IPR000158">
    <property type="entry name" value="Cell_div_FtsZ"/>
</dbReference>
<dbReference type="InterPro" id="IPR020805">
    <property type="entry name" value="Cell_div_FtsZ_CS"/>
</dbReference>
<dbReference type="InterPro" id="IPR045061">
    <property type="entry name" value="FtsZ/CetZ"/>
</dbReference>
<dbReference type="InterPro" id="IPR024757">
    <property type="entry name" value="FtsZ_C"/>
</dbReference>
<dbReference type="InterPro" id="IPR008280">
    <property type="entry name" value="Tub_FtsZ_C"/>
</dbReference>
<dbReference type="InterPro" id="IPR037103">
    <property type="entry name" value="Tubulin/FtsZ-like_C"/>
</dbReference>
<dbReference type="InterPro" id="IPR018316">
    <property type="entry name" value="Tubulin/FtsZ_2-layer-sand-dom"/>
</dbReference>
<dbReference type="InterPro" id="IPR036525">
    <property type="entry name" value="Tubulin/FtsZ_GTPase_sf"/>
</dbReference>
<dbReference type="InterPro" id="IPR003008">
    <property type="entry name" value="Tubulin_FtsZ_GTPase"/>
</dbReference>
<dbReference type="NCBIfam" id="TIGR00065">
    <property type="entry name" value="ftsZ"/>
    <property type="match status" value="1"/>
</dbReference>
<dbReference type="PANTHER" id="PTHR30314">
    <property type="entry name" value="CELL DIVISION PROTEIN FTSZ-RELATED"/>
    <property type="match status" value="1"/>
</dbReference>
<dbReference type="PANTHER" id="PTHR30314:SF3">
    <property type="entry name" value="MITOCHONDRIAL DIVISION PROTEIN FSZA"/>
    <property type="match status" value="1"/>
</dbReference>
<dbReference type="Pfam" id="PF12327">
    <property type="entry name" value="FtsZ_C"/>
    <property type="match status" value="1"/>
</dbReference>
<dbReference type="Pfam" id="PF00091">
    <property type="entry name" value="Tubulin"/>
    <property type="match status" value="1"/>
</dbReference>
<dbReference type="PRINTS" id="PR00423">
    <property type="entry name" value="CELLDVISFTSZ"/>
</dbReference>
<dbReference type="SMART" id="SM00864">
    <property type="entry name" value="Tubulin"/>
    <property type="match status" value="1"/>
</dbReference>
<dbReference type="SMART" id="SM00865">
    <property type="entry name" value="Tubulin_C"/>
    <property type="match status" value="1"/>
</dbReference>
<dbReference type="SUPFAM" id="SSF55307">
    <property type="entry name" value="Tubulin C-terminal domain-like"/>
    <property type="match status" value="1"/>
</dbReference>
<dbReference type="SUPFAM" id="SSF52490">
    <property type="entry name" value="Tubulin nucleotide-binding domain-like"/>
    <property type="match status" value="1"/>
</dbReference>
<dbReference type="PROSITE" id="PS01134">
    <property type="entry name" value="FTSZ_1"/>
    <property type="match status" value="1"/>
</dbReference>
<dbReference type="PROSITE" id="PS01135">
    <property type="entry name" value="FTSZ_2"/>
    <property type="match status" value="1"/>
</dbReference>
<proteinExistence type="evidence at protein level"/>
<sequence>MTPPHNYLAVIKVVGIGGGGVNAVNRMIEQGLKGVEFIAINTDAQALLMSDADVKLDVGRDSTRGLGAGADPEVGRKAAEDAKDEIEELLRGADMVFVTAGEGGGTGTGGAPVVASIARKLGALTVGVVTRPFSFEGKRRSNQAENGIAALRESCDTLIVIPNDRLLQMGDAAVSLMDAFRSADEVLLNGVQGITDLITTPGLINVDFADVKGIMSGAGTALMGIGSARGEGRSLKAAEIAINSPLLEASMEGAQGVLMSIAGGSDLGLFEINEAASLVQDAAHPDANIIFGTVIDDSLGDEVRVTVIAAGFDVSGPGRKPVMGETGGAHRIESAKAGKLTSTLFEPVDAVSVPLHTNGATLSIGGDDDDVDVPPFMRR</sequence>
<accession>A5U4H7</accession>
<evidence type="ECO:0000250" key="1"/>
<evidence type="ECO:0000255" key="2">
    <source>
        <dbReference type="HAMAP-Rule" id="MF_00909"/>
    </source>
</evidence>
<evidence type="ECO:0000269" key="3">
    <source>
    </source>
</evidence>
<reference key="1">
    <citation type="journal article" date="2008" name="PLoS ONE">
        <title>Genetic basis of virulence attenuation revealed by comparative genomic analysis of Mycobacterium tuberculosis strain H37Ra versus H37Rv.</title>
        <authorList>
            <person name="Zheng H."/>
            <person name="Lu L."/>
            <person name="Wang B."/>
            <person name="Pu S."/>
            <person name="Zhang X."/>
            <person name="Zhu G."/>
            <person name="Shi W."/>
            <person name="Zhang L."/>
            <person name="Wang H."/>
            <person name="Wang S."/>
            <person name="Zhao G."/>
            <person name="Zhang Y."/>
        </authorList>
    </citation>
    <scope>NUCLEOTIDE SEQUENCE [LARGE SCALE GENOMIC DNA]</scope>
    <source>
        <strain>ATCC 25177 / H37Ra</strain>
    </source>
</reference>
<reference key="2">
    <citation type="journal article" date="2006" name="J. Biol. Chem.">
        <title>GTPase activity of mycobacterial FtsZ is impaired due to its transphosphorylation by the eukaryotic-type Ser/Thr kinase, PknA.</title>
        <authorList>
            <person name="Thakur M."/>
            <person name="Chakraborti P.K."/>
        </authorList>
    </citation>
    <scope>FUNCTION AS A GTPASE</scope>
    <scope>ACTIVITY REGULATION</scope>
    <scope>INTERACTION WITH PKNA</scope>
    <scope>PHOSPHORYLATION</scope>
    <source>
        <strain>ATCC 25177 / H37Ra</strain>
    </source>
</reference>
<keyword id="KW-0131">Cell cycle</keyword>
<keyword id="KW-0132">Cell division</keyword>
<keyword id="KW-0963">Cytoplasm</keyword>
<keyword id="KW-0342">GTP-binding</keyword>
<keyword id="KW-0547">Nucleotide-binding</keyword>
<keyword id="KW-0597">Phosphoprotein</keyword>
<keyword id="KW-1185">Reference proteome</keyword>
<keyword id="KW-0717">Septation</keyword>
<organism>
    <name type="scientific">Mycobacterium tuberculosis (strain ATCC 25177 / H37Ra)</name>
    <dbReference type="NCBI Taxonomy" id="419947"/>
    <lineage>
        <taxon>Bacteria</taxon>
        <taxon>Bacillati</taxon>
        <taxon>Actinomycetota</taxon>
        <taxon>Actinomycetes</taxon>
        <taxon>Mycobacteriales</taxon>
        <taxon>Mycobacteriaceae</taxon>
        <taxon>Mycobacterium</taxon>
        <taxon>Mycobacterium tuberculosis complex</taxon>
    </lineage>
</organism>
<gene>
    <name evidence="2" type="primary">ftsZ</name>
    <name type="ordered locus">MRA_2165</name>
</gene>
<feature type="chain" id="PRO_0000419741" description="Cell division protein FtsZ">
    <location>
        <begin position="1"/>
        <end position="379"/>
    </location>
</feature>
<feature type="binding site" evidence="2">
    <location>
        <begin position="18"/>
        <end position="22"/>
    </location>
    <ligand>
        <name>GTP</name>
        <dbReference type="ChEBI" id="CHEBI:37565"/>
    </ligand>
</feature>
<feature type="binding site" evidence="2">
    <location>
        <begin position="105"/>
        <end position="107"/>
    </location>
    <ligand>
        <name>GTP</name>
        <dbReference type="ChEBI" id="CHEBI:37565"/>
    </ligand>
</feature>
<feature type="binding site" evidence="2">
    <location>
        <position position="136"/>
    </location>
    <ligand>
        <name>GTP</name>
        <dbReference type="ChEBI" id="CHEBI:37565"/>
    </ligand>
</feature>
<feature type="binding site" evidence="2">
    <location>
        <position position="140"/>
    </location>
    <ligand>
        <name>GTP</name>
        <dbReference type="ChEBI" id="CHEBI:37565"/>
    </ligand>
</feature>
<feature type="binding site" evidence="2">
    <location>
        <position position="184"/>
    </location>
    <ligand>
        <name>GTP</name>
        <dbReference type="ChEBI" id="CHEBI:37565"/>
    </ligand>
</feature>
<feature type="modified residue" description="Phosphothreonine" evidence="1">
    <location>
        <position position="343"/>
    </location>
</feature>
<name>FTSZ_MYCTA</name>
<protein>
    <recommendedName>
        <fullName evidence="2">Cell division protein FtsZ</fullName>
    </recommendedName>
</protein>
<comment type="function">
    <text evidence="2 3">Essential cell division protein that forms a contractile ring structure (Z ring) at the future cell division site. The regulation of the ring assembly controls the timing and the location of cell division. One of the functions of the FtsZ ring is to recruit other cell division proteins to the septum to produce a new cell wall between the dividing cells (By similarity). Binds GTP and shows GTPase activity.</text>
</comment>
<comment type="activity regulation">
    <text evidence="3">Phosphorylation affects GTPase activity as well as polymerization ability.</text>
</comment>
<comment type="subunit">
    <text evidence="2 3">Homodimer. Polymerizes to form a dynamic ring structure in a strictly GTP-dependent manner. Interacts directly with several other division proteins (By similarity). Interacts with PknA.</text>
</comment>
<comment type="subcellular location">
    <subcellularLocation>
        <location evidence="2">Cytoplasm</location>
    </subcellularLocation>
    <text evidence="2">Assembles at midcell at the inner surface of the cytoplasmic membrane.</text>
</comment>
<comment type="PTM">
    <text evidence="3">Phosphorylated by PknA.</text>
</comment>
<comment type="similarity">
    <text evidence="2">Belongs to the FtsZ family.</text>
</comment>